<organism>
    <name type="scientific">Fusarium vanettenii</name>
    <name type="common">Neocosmospora pisi</name>
    <dbReference type="NCBI Taxonomy" id="2747968"/>
    <lineage>
        <taxon>Eukaryota</taxon>
        <taxon>Fungi</taxon>
        <taxon>Dikarya</taxon>
        <taxon>Ascomycota</taxon>
        <taxon>Pezizomycotina</taxon>
        <taxon>Sordariomycetes</taxon>
        <taxon>Hypocreomycetidae</taxon>
        <taxon>Hypocreales</taxon>
        <taxon>Nectriaceae</taxon>
        <taxon>Fusarium</taxon>
        <taxon>Fusarium solani species complex</taxon>
    </lineage>
</organism>
<gene>
    <name type="primary">MAPK</name>
</gene>
<evidence type="ECO:0000250" key="1"/>
<evidence type="ECO:0000255" key="2">
    <source>
        <dbReference type="PROSITE-ProRule" id="PRU00159"/>
    </source>
</evidence>
<evidence type="ECO:0000255" key="3">
    <source>
        <dbReference type="PROSITE-ProRule" id="PRU10027"/>
    </source>
</evidence>
<evidence type="ECO:0000305" key="4"/>
<reference key="1">
    <citation type="journal article" date="1997" name="Gene">
        <title>Cloning and expression of cDNA encoding a mitogen-activated protein kinase from a phytopathogenic filamentous fungus.</title>
        <authorList>
            <person name="Li D."/>
            <person name="Rogers L."/>
            <person name="Kolattukudy P.E."/>
        </authorList>
    </citation>
    <scope>NUCLEOTIDE SEQUENCE [MRNA]</scope>
    <source>
        <strain>T-8</strain>
    </source>
</reference>
<feature type="chain" id="PRO_0000186335" description="Mitogen-activated protein kinase">
    <location>
        <begin position="1"/>
        <end position="355"/>
    </location>
</feature>
<feature type="domain" description="Protein kinase" evidence="2">
    <location>
        <begin position="23"/>
        <end position="311"/>
    </location>
</feature>
<feature type="short sequence motif" description="TXY">
    <location>
        <begin position="183"/>
        <end position="185"/>
    </location>
</feature>
<feature type="active site" description="Proton acceptor" evidence="2 3">
    <location>
        <position position="147"/>
    </location>
</feature>
<feature type="binding site" evidence="2">
    <location>
        <begin position="29"/>
        <end position="37"/>
    </location>
    <ligand>
        <name>ATP</name>
        <dbReference type="ChEBI" id="CHEBI:30616"/>
    </ligand>
</feature>
<feature type="binding site" evidence="2">
    <location>
        <position position="52"/>
    </location>
    <ligand>
        <name>ATP</name>
        <dbReference type="ChEBI" id="CHEBI:30616"/>
    </ligand>
</feature>
<feature type="modified residue" description="Phosphothreonine" evidence="1">
    <location>
        <position position="183"/>
    </location>
</feature>
<feature type="modified residue" description="Phosphotyrosine" evidence="1">
    <location>
        <position position="185"/>
    </location>
</feature>
<protein>
    <recommendedName>
        <fullName>Mitogen-activated protein kinase</fullName>
        <ecNumber>2.7.11.24</ecNumber>
    </recommendedName>
    <alternativeName>
        <fullName>FsMAPK</fullName>
    </alternativeName>
</protein>
<name>MAPK_FUSVN</name>
<keyword id="KW-0067">ATP-binding</keyword>
<keyword id="KW-0418">Kinase</keyword>
<keyword id="KW-0547">Nucleotide-binding</keyword>
<keyword id="KW-0539">Nucleus</keyword>
<keyword id="KW-0597">Phosphoprotein</keyword>
<keyword id="KW-0723">Serine/threonine-protein kinase</keyword>
<keyword id="KW-0808">Transferase</keyword>
<proteinExistence type="evidence at transcript level"/>
<dbReference type="EC" id="2.7.11.24"/>
<dbReference type="EMBL" id="U52963">
    <property type="protein sequence ID" value="AAB72017.1"/>
    <property type="molecule type" value="mRNA"/>
</dbReference>
<dbReference type="SMR" id="Q00859"/>
<dbReference type="VEuPathDB" id="FungiDB:NECHADRAFT_103967"/>
<dbReference type="GO" id="GO:0005634">
    <property type="term" value="C:nucleus"/>
    <property type="evidence" value="ECO:0007669"/>
    <property type="project" value="UniProtKB-SubCell"/>
</dbReference>
<dbReference type="GO" id="GO:0005524">
    <property type="term" value="F:ATP binding"/>
    <property type="evidence" value="ECO:0007669"/>
    <property type="project" value="UniProtKB-KW"/>
</dbReference>
<dbReference type="GO" id="GO:0004707">
    <property type="term" value="F:MAP kinase activity"/>
    <property type="evidence" value="ECO:0007669"/>
    <property type="project" value="UniProtKB-EC"/>
</dbReference>
<dbReference type="GO" id="GO:0106310">
    <property type="term" value="F:protein serine kinase activity"/>
    <property type="evidence" value="ECO:0007669"/>
    <property type="project" value="RHEA"/>
</dbReference>
<dbReference type="CDD" id="cd07849">
    <property type="entry name" value="STKc_ERK1_2_like"/>
    <property type="match status" value="1"/>
</dbReference>
<dbReference type="FunFam" id="1.10.510.10:FF:000040">
    <property type="entry name" value="Mitogen-activated protein kinase"/>
    <property type="match status" value="1"/>
</dbReference>
<dbReference type="FunFam" id="3.30.200.20:FF:000073">
    <property type="entry name" value="Mitogen-activated protein kinase"/>
    <property type="match status" value="1"/>
</dbReference>
<dbReference type="Gene3D" id="3.30.200.20">
    <property type="entry name" value="Phosphorylase Kinase, domain 1"/>
    <property type="match status" value="1"/>
</dbReference>
<dbReference type="Gene3D" id="1.10.510.10">
    <property type="entry name" value="Transferase(Phosphotransferase) domain 1"/>
    <property type="match status" value="1"/>
</dbReference>
<dbReference type="InterPro" id="IPR011009">
    <property type="entry name" value="Kinase-like_dom_sf"/>
</dbReference>
<dbReference type="InterPro" id="IPR050117">
    <property type="entry name" value="MAP_kinase"/>
</dbReference>
<dbReference type="InterPro" id="IPR003527">
    <property type="entry name" value="MAP_kinase_CS"/>
</dbReference>
<dbReference type="InterPro" id="IPR000719">
    <property type="entry name" value="Prot_kinase_dom"/>
</dbReference>
<dbReference type="InterPro" id="IPR017441">
    <property type="entry name" value="Protein_kinase_ATP_BS"/>
</dbReference>
<dbReference type="InterPro" id="IPR008271">
    <property type="entry name" value="Ser/Thr_kinase_AS"/>
</dbReference>
<dbReference type="PANTHER" id="PTHR24055">
    <property type="entry name" value="MITOGEN-ACTIVATED PROTEIN KINASE"/>
    <property type="match status" value="1"/>
</dbReference>
<dbReference type="Pfam" id="PF00069">
    <property type="entry name" value="Pkinase"/>
    <property type="match status" value="1"/>
</dbReference>
<dbReference type="SMART" id="SM00220">
    <property type="entry name" value="S_TKc"/>
    <property type="match status" value="1"/>
</dbReference>
<dbReference type="SUPFAM" id="SSF56112">
    <property type="entry name" value="Protein kinase-like (PK-like)"/>
    <property type="match status" value="1"/>
</dbReference>
<dbReference type="PROSITE" id="PS01351">
    <property type="entry name" value="MAPK"/>
    <property type="match status" value="1"/>
</dbReference>
<dbReference type="PROSITE" id="PS00107">
    <property type="entry name" value="PROTEIN_KINASE_ATP"/>
    <property type="match status" value="1"/>
</dbReference>
<dbReference type="PROSITE" id="PS50011">
    <property type="entry name" value="PROTEIN_KINASE_DOM"/>
    <property type="match status" value="1"/>
</dbReference>
<dbReference type="PROSITE" id="PS00108">
    <property type="entry name" value="PROTEIN_KINASE_ST"/>
    <property type="match status" value="1"/>
</dbReference>
<comment type="function">
    <text evidence="1">Responds to activation by environmental stress by phosphorylating downstream targets.</text>
</comment>
<comment type="catalytic activity">
    <reaction>
        <text>L-seryl-[protein] + ATP = O-phospho-L-seryl-[protein] + ADP + H(+)</text>
        <dbReference type="Rhea" id="RHEA:17989"/>
        <dbReference type="Rhea" id="RHEA-COMP:9863"/>
        <dbReference type="Rhea" id="RHEA-COMP:11604"/>
        <dbReference type="ChEBI" id="CHEBI:15378"/>
        <dbReference type="ChEBI" id="CHEBI:29999"/>
        <dbReference type="ChEBI" id="CHEBI:30616"/>
        <dbReference type="ChEBI" id="CHEBI:83421"/>
        <dbReference type="ChEBI" id="CHEBI:456216"/>
        <dbReference type="EC" id="2.7.11.24"/>
    </reaction>
</comment>
<comment type="catalytic activity">
    <reaction>
        <text>L-threonyl-[protein] + ATP = O-phospho-L-threonyl-[protein] + ADP + H(+)</text>
        <dbReference type="Rhea" id="RHEA:46608"/>
        <dbReference type="Rhea" id="RHEA-COMP:11060"/>
        <dbReference type="Rhea" id="RHEA-COMP:11605"/>
        <dbReference type="ChEBI" id="CHEBI:15378"/>
        <dbReference type="ChEBI" id="CHEBI:30013"/>
        <dbReference type="ChEBI" id="CHEBI:30616"/>
        <dbReference type="ChEBI" id="CHEBI:61977"/>
        <dbReference type="ChEBI" id="CHEBI:456216"/>
        <dbReference type="EC" id="2.7.11.24"/>
    </reaction>
</comment>
<comment type="activity regulation">
    <text evidence="1">Activated by tyrosine and threonine phosphorylation.</text>
</comment>
<comment type="subcellular location">
    <subcellularLocation>
        <location evidence="4">Nucleus</location>
    </subcellularLocation>
</comment>
<comment type="domain">
    <text>The TXY motif contains the threonine and tyrosine residues whose phosphorylation activates the MAP kinases.</text>
</comment>
<comment type="PTM">
    <text evidence="1">Dually phosphorylated on Thr-183 and Tyr-185, which activates the enzyme.</text>
</comment>
<comment type="similarity">
    <text evidence="4">Belongs to the protein kinase superfamily. CMGC Ser/Thr protein kinase family. MAP kinase subfamily.</text>
</comment>
<sequence>MSRSNPPNPTGSRKISFNVSEQYDIQDVVGEGAYGVVCSAIHKPSGQKVAIKKITPFDHSMFCLRTLREMKLLRYFNHENIISILDIQKPRNYESFNEVYLIQELMETDMHRAIRTQDLSDDHCQYFIYQTLRALKAMHSANVLHRDLKPSNLLLNANCDLKVCDFGLARSAASQEDNSGFMTEYVATRWYRAPEIMLTFKEYTKAIDVWSVGCILAEMLSGKPLFPGKDYHHQLTLILDVLGTPTMEDYYGIKSRRAREYIRSLPFKKKVPFRTLFPKTSDLALDLLEKLLAFNPVKRITVEEALKHPYLEPYHDPEDEPTAPPIPEEFFDFDKHKDNLSKEQLKQLIYQEIMR</sequence>
<accession>Q00859</accession>